<dbReference type="EC" id="6.3.2.6" evidence="1"/>
<dbReference type="EMBL" id="AE016879">
    <property type="protein sequence ID" value="AAP24327.1"/>
    <property type="molecule type" value="Genomic_DNA"/>
</dbReference>
<dbReference type="EMBL" id="AE017334">
    <property type="protein sequence ID" value="AAT29378.1"/>
    <property type="molecule type" value="Genomic_DNA"/>
</dbReference>
<dbReference type="EMBL" id="AE017225">
    <property type="protein sequence ID" value="AAT52609.1"/>
    <property type="molecule type" value="Genomic_DNA"/>
</dbReference>
<dbReference type="RefSeq" id="NP_842841.1">
    <property type="nucleotide sequence ID" value="NC_003997.3"/>
</dbReference>
<dbReference type="RefSeq" id="WP_001170540.1">
    <property type="nucleotide sequence ID" value="NZ_WXXJ01000007.1"/>
</dbReference>
<dbReference type="RefSeq" id="YP_026558.1">
    <property type="nucleotide sequence ID" value="NC_005945.1"/>
</dbReference>
<dbReference type="SMR" id="Q81ZH5"/>
<dbReference type="IntAct" id="Q81ZH5">
    <property type="interactions" value="1"/>
</dbReference>
<dbReference type="STRING" id="261594.GBAA_0291"/>
<dbReference type="DNASU" id="1088229"/>
<dbReference type="GeneID" id="45020350"/>
<dbReference type="KEGG" id="ban:BA_0291"/>
<dbReference type="KEGG" id="bar:GBAA_0291"/>
<dbReference type="KEGG" id="bat:BAS0278"/>
<dbReference type="PATRIC" id="fig|198094.11.peg.282"/>
<dbReference type="eggNOG" id="COG0152">
    <property type="taxonomic scope" value="Bacteria"/>
</dbReference>
<dbReference type="HOGENOM" id="CLU_061495_2_0_9"/>
<dbReference type="OMA" id="EFCYKND"/>
<dbReference type="OrthoDB" id="9801549at2"/>
<dbReference type="BRENDA" id="6.3.2.6">
    <property type="organism ID" value="634"/>
</dbReference>
<dbReference type="UniPathway" id="UPA00074">
    <property type="reaction ID" value="UER00131"/>
</dbReference>
<dbReference type="Proteomes" id="UP000000427">
    <property type="component" value="Chromosome"/>
</dbReference>
<dbReference type="Proteomes" id="UP000000594">
    <property type="component" value="Chromosome"/>
</dbReference>
<dbReference type="GO" id="GO:0005524">
    <property type="term" value="F:ATP binding"/>
    <property type="evidence" value="ECO:0007669"/>
    <property type="project" value="UniProtKB-KW"/>
</dbReference>
<dbReference type="GO" id="GO:0004639">
    <property type="term" value="F:phosphoribosylaminoimidazolesuccinocarboxamide synthase activity"/>
    <property type="evidence" value="ECO:0007669"/>
    <property type="project" value="UniProtKB-UniRule"/>
</dbReference>
<dbReference type="GO" id="GO:0006189">
    <property type="term" value="P:'de novo' IMP biosynthetic process"/>
    <property type="evidence" value="ECO:0007669"/>
    <property type="project" value="UniProtKB-UniRule"/>
</dbReference>
<dbReference type="GO" id="GO:0009236">
    <property type="term" value="P:cobalamin biosynthetic process"/>
    <property type="evidence" value="ECO:0007669"/>
    <property type="project" value="InterPro"/>
</dbReference>
<dbReference type="CDD" id="cd01415">
    <property type="entry name" value="SAICAR_synt_PurC"/>
    <property type="match status" value="1"/>
</dbReference>
<dbReference type="FunFam" id="3.30.200.20:FF:000189">
    <property type="entry name" value="Phosphoribosylaminoimidazole-succinocarboxamide synthase"/>
    <property type="match status" value="1"/>
</dbReference>
<dbReference type="FunFam" id="3.30.470.20:FF:000006">
    <property type="entry name" value="Phosphoribosylaminoimidazole-succinocarboxamide synthase"/>
    <property type="match status" value="1"/>
</dbReference>
<dbReference type="Gene3D" id="3.30.470.20">
    <property type="entry name" value="ATP-grasp fold, B domain"/>
    <property type="match status" value="1"/>
</dbReference>
<dbReference type="Gene3D" id="3.30.200.20">
    <property type="entry name" value="Phosphorylase Kinase, domain 1"/>
    <property type="match status" value="1"/>
</dbReference>
<dbReference type="HAMAP" id="MF_00137">
    <property type="entry name" value="SAICAR_synth"/>
    <property type="match status" value="1"/>
</dbReference>
<dbReference type="InterPro" id="IPR028923">
    <property type="entry name" value="SAICAR_synt/ADE2_N"/>
</dbReference>
<dbReference type="InterPro" id="IPR033934">
    <property type="entry name" value="SAICAR_synt_PurC"/>
</dbReference>
<dbReference type="InterPro" id="IPR001636">
    <property type="entry name" value="SAICAR_synth"/>
</dbReference>
<dbReference type="InterPro" id="IPR050089">
    <property type="entry name" value="SAICAR_synthetase"/>
</dbReference>
<dbReference type="InterPro" id="IPR018236">
    <property type="entry name" value="SAICAR_synthetase_CS"/>
</dbReference>
<dbReference type="NCBIfam" id="TIGR00081">
    <property type="entry name" value="purC"/>
    <property type="match status" value="1"/>
</dbReference>
<dbReference type="PANTHER" id="PTHR43599">
    <property type="entry name" value="MULTIFUNCTIONAL PROTEIN ADE2"/>
    <property type="match status" value="1"/>
</dbReference>
<dbReference type="PANTHER" id="PTHR43599:SF3">
    <property type="entry name" value="SI:DKEY-6E2.2"/>
    <property type="match status" value="1"/>
</dbReference>
<dbReference type="Pfam" id="PF01259">
    <property type="entry name" value="SAICAR_synt"/>
    <property type="match status" value="1"/>
</dbReference>
<dbReference type="SUPFAM" id="SSF56104">
    <property type="entry name" value="SAICAR synthase-like"/>
    <property type="match status" value="1"/>
</dbReference>
<dbReference type="PROSITE" id="PS01057">
    <property type="entry name" value="SAICAR_SYNTHETASE_1"/>
    <property type="match status" value="1"/>
</dbReference>
<dbReference type="PROSITE" id="PS01058">
    <property type="entry name" value="SAICAR_SYNTHETASE_2"/>
    <property type="match status" value="1"/>
</dbReference>
<protein>
    <recommendedName>
        <fullName evidence="1">Phosphoribosylaminoimidazole-succinocarboxamide synthase</fullName>
        <ecNumber evidence="1">6.3.2.6</ecNumber>
    </recommendedName>
    <alternativeName>
        <fullName evidence="1">SAICAR synthetase</fullName>
    </alternativeName>
</protein>
<feature type="chain" id="PRO_0000100798" description="Phosphoribosylaminoimidazole-succinocarboxamide synthase">
    <location>
        <begin position="1"/>
        <end position="239"/>
    </location>
</feature>
<accession>Q81ZH5</accession>
<accession>Q6I4C2</accession>
<accession>Q6KY24</accession>
<sequence>MQKLELLYEGKAKRIYRTESADMVWVEYKDSATAFNGEKKETITGKGRLNNEITTLLFRKLQEVGIKTHFVEKLSETEQLVKKVSIIPLEVVTRNVIAGSLSKRLGMEEGTVLAEPIVEFYFKDDDLGDPLVTEDHIRVLNVASPEQVSVLRDMALQINQVLIDHFASCRVRLVDFKLEFGVTDEGAIILADEISPDTCRLWDETSNEKFDKDVFRRDLGNLTDAYEEILKRLGGISHV</sequence>
<reference key="1">
    <citation type="journal article" date="2003" name="Nature">
        <title>The genome sequence of Bacillus anthracis Ames and comparison to closely related bacteria.</title>
        <authorList>
            <person name="Read T.D."/>
            <person name="Peterson S.N."/>
            <person name="Tourasse N.J."/>
            <person name="Baillie L.W."/>
            <person name="Paulsen I.T."/>
            <person name="Nelson K.E."/>
            <person name="Tettelin H."/>
            <person name="Fouts D.E."/>
            <person name="Eisen J.A."/>
            <person name="Gill S.R."/>
            <person name="Holtzapple E.K."/>
            <person name="Okstad O.A."/>
            <person name="Helgason E."/>
            <person name="Rilstone J."/>
            <person name="Wu M."/>
            <person name="Kolonay J.F."/>
            <person name="Beanan M.J."/>
            <person name="Dodson R.J."/>
            <person name="Brinkac L.M."/>
            <person name="Gwinn M.L."/>
            <person name="DeBoy R.T."/>
            <person name="Madpu R."/>
            <person name="Daugherty S.C."/>
            <person name="Durkin A.S."/>
            <person name="Haft D.H."/>
            <person name="Nelson W.C."/>
            <person name="Peterson J.D."/>
            <person name="Pop M."/>
            <person name="Khouri H.M."/>
            <person name="Radune D."/>
            <person name="Benton J.L."/>
            <person name="Mahamoud Y."/>
            <person name="Jiang L."/>
            <person name="Hance I.R."/>
            <person name="Weidman J.F."/>
            <person name="Berry K.J."/>
            <person name="Plaut R.D."/>
            <person name="Wolf A.M."/>
            <person name="Watkins K.L."/>
            <person name="Nierman W.C."/>
            <person name="Hazen A."/>
            <person name="Cline R.T."/>
            <person name="Redmond C."/>
            <person name="Thwaite J.E."/>
            <person name="White O."/>
            <person name="Salzberg S.L."/>
            <person name="Thomason B."/>
            <person name="Friedlander A.M."/>
            <person name="Koehler T.M."/>
            <person name="Hanna P.C."/>
            <person name="Kolstoe A.-B."/>
            <person name="Fraser C.M."/>
        </authorList>
    </citation>
    <scope>NUCLEOTIDE SEQUENCE [LARGE SCALE GENOMIC DNA]</scope>
    <source>
        <strain>Ames / isolate Porton</strain>
    </source>
</reference>
<reference key="2">
    <citation type="journal article" date="2009" name="J. Bacteriol.">
        <title>The complete genome sequence of Bacillus anthracis Ames 'Ancestor'.</title>
        <authorList>
            <person name="Ravel J."/>
            <person name="Jiang L."/>
            <person name="Stanley S.T."/>
            <person name="Wilson M.R."/>
            <person name="Decker R.S."/>
            <person name="Read T.D."/>
            <person name="Worsham P."/>
            <person name="Keim P.S."/>
            <person name="Salzberg S.L."/>
            <person name="Fraser-Liggett C.M."/>
            <person name="Rasko D.A."/>
        </authorList>
    </citation>
    <scope>NUCLEOTIDE SEQUENCE [LARGE SCALE GENOMIC DNA]</scope>
    <source>
        <strain>Ames ancestor</strain>
    </source>
</reference>
<reference key="3">
    <citation type="submission" date="2004-01" db="EMBL/GenBank/DDBJ databases">
        <title>Complete genome sequence of Bacillus anthracis Sterne.</title>
        <authorList>
            <person name="Brettin T.S."/>
            <person name="Bruce D."/>
            <person name="Challacombe J.F."/>
            <person name="Gilna P."/>
            <person name="Han C."/>
            <person name="Hill K."/>
            <person name="Hitchcock P."/>
            <person name="Jackson P."/>
            <person name="Keim P."/>
            <person name="Longmire J."/>
            <person name="Lucas S."/>
            <person name="Okinaka R."/>
            <person name="Richardson P."/>
            <person name="Rubin E."/>
            <person name="Tice H."/>
        </authorList>
    </citation>
    <scope>NUCLEOTIDE SEQUENCE [LARGE SCALE GENOMIC DNA]</scope>
    <source>
        <strain>Sterne</strain>
    </source>
</reference>
<keyword id="KW-0067">ATP-binding</keyword>
<keyword id="KW-0436">Ligase</keyword>
<keyword id="KW-0547">Nucleotide-binding</keyword>
<keyword id="KW-0658">Purine biosynthesis</keyword>
<keyword id="KW-1185">Reference proteome</keyword>
<organism>
    <name type="scientific">Bacillus anthracis</name>
    <dbReference type="NCBI Taxonomy" id="1392"/>
    <lineage>
        <taxon>Bacteria</taxon>
        <taxon>Bacillati</taxon>
        <taxon>Bacillota</taxon>
        <taxon>Bacilli</taxon>
        <taxon>Bacillales</taxon>
        <taxon>Bacillaceae</taxon>
        <taxon>Bacillus</taxon>
        <taxon>Bacillus cereus group</taxon>
    </lineage>
</organism>
<comment type="catalytic activity">
    <reaction evidence="1">
        <text>5-amino-1-(5-phospho-D-ribosyl)imidazole-4-carboxylate + L-aspartate + ATP = (2S)-2-[5-amino-1-(5-phospho-beta-D-ribosyl)imidazole-4-carboxamido]succinate + ADP + phosphate + 2 H(+)</text>
        <dbReference type="Rhea" id="RHEA:22628"/>
        <dbReference type="ChEBI" id="CHEBI:15378"/>
        <dbReference type="ChEBI" id="CHEBI:29991"/>
        <dbReference type="ChEBI" id="CHEBI:30616"/>
        <dbReference type="ChEBI" id="CHEBI:43474"/>
        <dbReference type="ChEBI" id="CHEBI:58443"/>
        <dbReference type="ChEBI" id="CHEBI:77657"/>
        <dbReference type="ChEBI" id="CHEBI:456216"/>
        <dbReference type="EC" id="6.3.2.6"/>
    </reaction>
</comment>
<comment type="pathway">
    <text evidence="1">Purine metabolism; IMP biosynthesis via de novo pathway; 5-amino-1-(5-phospho-D-ribosyl)imidazole-4-carboxamide from 5-amino-1-(5-phospho-D-ribosyl)imidazole-4-carboxylate: step 1/2.</text>
</comment>
<comment type="similarity">
    <text evidence="1">Belongs to the SAICAR synthetase family.</text>
</comment>
<name>PUR7_BACAN</name>
<evidence type="ECO:0000255" key="1">
    <source>
        <dbReference type="HAMAP-Rule" id="MF_00137"/>
    </source>
</evidence>
<proteinExistence type="inferred from homology"/>
<gene>
    <name evidence="1" type="primary">purC</name>
    <name type="ordered locus">BA_0291</name>
    <name type="ordered locus">GBAA_0291</name>
    <name type="ordered locus">BAS0278</name>
</gene>